<keyword id="KW-0963">Cytoplasm</keyword>
<keyword id="KW-0342">GTP-binding</keyword>
<keyword id="KW-0396">Initiation factor</keyword>
<keyword id="KW-0547">Nucleotide-binding</keyword>
<keyword id="KW-0648">Protein biosynthesis</keyword>
<sequence length="882" mass="98854">MMAKKRIYEVAKELGIENKIVVKKAQDLGFDVKSHMSSLDDKQVSKLVDSFKSANTTKPSTEKDSKNSSRKEKTKIKVSVGAIRRRDNKNDHDNRHGNNKRRNNKFKKQQNDRRAERNKPQTEAKSAARDLLNKFKKKQRAEASELNAQTEASRRKWHQEQNPQRSKVKKVENTRKPKEEKLEGAAAVKARVQASQKPVGPKIIKPSPARNKAKRPTVKKVEPIAPVVPAPQKEETKPTRKKDFTRKKREVPDYERERSEHSDKARRRRNKKNKRINQSKEIKKQPTQRKERPLPETLVYEEGMNAQDLGKLLHREPAEIVKKLFMLGVMTNQNQSLDKDTIELLAAEYGIEAQEKVHEDISDIDTLYTKEMEESKASKHQEKRPPVVTIMGHVDHGKTTLLDRLRHTNVSEHEAGGITQKIGAYQVRIDDRLITFLDTPGHAAFSNMRARGAEITDIVVLVVAADDGVMPQTIEAIDHAKSAGVPIIVAVNKIDKPGANPDHVMEQLMKYGLVPEDWGGDTIFVKISAKTGKNVEELLQMILLQADVMELKADPDQKAIGTVIEARLDKGRGSVADVLVQQGTLKVGDPIVVGDTFGRVRVMTNDKGRRVKKATPSAPVEITGLNDVPEAADKLVVFEDEKTARSVGEQRAKNALEKQRENVQHVTLDNLFDTMKKENMKEVDIVLKADVQGSAEALQQSLEKIEVEGVRVNIIHSGVGAINESDVTLAGASNAFIVGFNVRPTNTAKSQADAEGVDIRLYNIIYKVMDDVEAAMKGMLEPTYEEKVTGNLTVRETWKVSKIGTIAGAFVDNGYVTRDSGIRVIRDGIVKYDGKVASLKRFKDDVKEVKQGFDCGITIENFNDIKVDDQLEAYEMQEVPVK</sequence>
<evidence type="ECO:0000250" key="1"/>
<evidence type="ECO:0000255" key="2">
    <source>
        <dbReference type="HAMAP-Rule" id="MF_00100"/>
    </source>
</evidence>
<evidence type="ECO:0000256" key="3">
    <source>
        <dbReference type="SAM" id="MobiDB-lite"/>
    </source>
</evidence>
<organism>
    <name type="scientific">Lactobacillus gasseri (strain ATCC 33323 / DSM 20243 / BCRC 14619 / CIP 102991 / JCM 1131 / KCTC 3163 / NCIMB 11718 / NCTC 13722 / AM63)</name>
    <dbReference type="NCBI Taxonomy" id="324831"/>
    <lineage>
        <taxon>Bacteria</taxon>
        <taxon>Bacillati</taxon>
        <taxon>Bacillota</taxon>
        <taxon>Bacilli</taxon>
        <taxon>Lactobacillales</taxon>
        <taxon>Lactobacillaceae</taxon>
        <taxon>Lactobacillus</taxon>
    </lineage>
</organism>
<protein>
    <recommendedName>
        <fullName evidence="2">Translation initiation factor IF-2</fullName>
    </recommendedName>
</protein>
<name>IF2_LACGA</name>
<reference key="1">
    <citation type="journal article" date="2006" name="Proc. Natl. Acad. Sci. U.S.A.">
        <title>Comparative genomics of the lactic acid bacteria.</title>
        <authorList>
            <person name="Makarova K.S."/>
            <person name="Slesarev A."/>
            <person name="Wolf Y.I."/>
            <person name="Sorokin A."/>
            <person name="Mirkin B."/>
            <person name="Koonin E.V."/>
            <person name="Pavlov A."/>
            <person name="Pavlova N."/>
            <person name="Karamychev V."/>
            <person name="Polouchine N."/>
            <person name="Shakhova V."/>
            <person name="Grigoriev I."/>
            <person name="Lou Y."/>
            <person name="Rohksar D."/>
            <person name="Lucas S."/>
            <person name="Huang K."/>
            <person name="Goodstein D.M."/>
            <person name="Hawkins T."/>
            <person name="Plengvidhya V."/>
            <person name="Welker D."/>
            <person name="Hughes J."/>
            <person name="Goh Y."/>
            <person name="Benson A."/>
            <person name="Baldwin K."/>
            <person name="Lee J.-H."/>
            <person name="Diaz-Muniz I."/>
            <person name="Dosti B."/>
            <person name="Smeianov V."/>
            <person name="Wechter W."/>
            <person name="Barabote R."/>
            <person name="Lorca G."/>
            <person name="Altermann E."/>
            <person name="Barrangou R."/>
            <person name="Ganesan B."/>
            <person name="Xie Y."/>
            <person name="Rawsthorne H."/>
            <person name="Tamir D."/>
            <person name="Parker C."/>
            <person name="Breidt F."/>
            <person name="Broadbent J.R."/>
            <person name="Hutkins R."/>
            <person name="O'Sullivan D."/>
            <person name="Steele J."/>
            <person name="Unlu G."/>
            <person name="Saier M.H. Jr."/>
            <person name="Klaenhammer T."/>
            <person name="Richardson P."/>
            <person name="Kozyavkin S."/>
            <person name="Weimer B.C."/>
            <person name="Mills D.A."/>
        </authorList>
    </citation>
    <scope>NUCLEOTIDE SEQUENCE [LARGE SCALE GENOMIC DNA]</scope>
    <source>
        <strain>ATCC 33323 / DSM 20243 / BCRC 14619 / CIP 102991 / JCM 1131 / KCTC 3163 / NCIMB 11718 / NCTC 13722 / AM63</strain>
    </source>
</reference>
<feature type="chain" id="PRO_0000335481" description="Translation initiation factor IF-2">
    <location>
        <begin position="1"/>
        <end position="882"/>
    </location>
</feature>
<feature type="domain" description="tr-type G">
    <location>
        <begin position="383"/>
        <end position="552"/>
    </location>
</feature>
<feature type="region of interest" description="Disordered" evidence="3">
    <location>
        <begin position="50"/>
        <end position="299"/>
    </location>
</feature>
<feature type="region of interest" description="G1" evidence="1">
    <location>
        <begin position="392"/>
        <end position="399"/>
    </location>
</feature>
<feature type="region of interest" description="G2" evidence="1">
    <location>
        <begin position="417"/>
        <end position="421"/>
    </location>
</feature>
<feature type="region of interest" description="G3" evidence="1">
    <location>
        <begin position="438"/>
        <end position="441"/>
    </location>
</feature>
<feature type="region of interest" description="G4" evidence="1">
    <location>
        <begin position="492"/>
        <end position="495"/>
    </location>
</feature>
<feature type="region of interest" description="G5" evidence="1">
    <location>
        <begin position="528"/>
        <end position="530"/>
    </location>
</feature>
<feature type="compositionally biased region" description="Basic and acidic residues" evidence="3">
    <location>
        <begin position="60"/>
        <end position="71"/>
    </location>
</feature>
<feature type="compositionally biased region" description="Basic and acidic residues" evidence="3">
    <location>
        <begin position="84"/>
        <end position="96"/>
    </location>
</feature>
<feature type="compositionally biased region" description="Basic residues" evidence="3">
    <location>
        <begin position="97"/>
        <end position="108"/>
    </location>
</feature>
<feature type="compositionally biased region" description="Basic and acidic residues" evidence="3">
    <location>
        <begin position="109"/>
        <end position="133"/>
    </location>
</feature>
<feature type="compositionally biased region" description="Basic and acidic residues" evidence="3">
    <location>
        <begin position="169"/>
        <end position="183"/>
    </location>
</feature>
<feature type="compositionally biased region" description="Basic and acidic residues" evidence="3">
    <location>
        <begin position="232"/>
        <end position="242"/>
    </location>
</feature>
<feature type="compositionally biased region" description="Basic and acidic residues" evidence="3">
    <location>
        <begin position="250"/>
        <end position="263"/>
    </location>
</feature>
<feature type="compositionally biased region" description="Basic residues" evidence="3">
    <location>
        <begin position="264"/>
        <end position="277"/>
    </location>
</feature>
<feature type="compositionally biased region" description="Basic and acidic residues" evidence="3">
    <location>
        <begin position="278"/>
        <end position="294"/>
    </location>
</feature>
<feature type="binding site" evidence="2">
    <location>
        <begin position="392"/>
        <end position="399"/>
    </location>
    <ligand>
        <name>GTP</name>
        <dbReference type="ChEBI" id="CHEBI:37565"/>
    </ligand>
</feature>
<feature type="binding site" evidence="2">
    <location>
        <begin position="438"/>
        <end position="442"/>
    </location>
    <ligand>
        <name>GTP</name>
        <dbReference type="ChEBI" id="CHEBI:37565"/>
    </ligand>
</feature>
<feature type="binding site" evidence="2">
    <location>
        <begin position="492"/>
        <end position="495"/>
    </location>
    <ligand>
        <name>GTP</name>
        <dbReference type="ChEBI" id="CHEBI:37565"/>
    </ligand>
</feature>
<proteinExistence type="inferred from homology"/>
<comment type="function">
    <text evidence="2">One of the essential components for the initiation of protein synthesis. Protects formylmethionyl-tRNA from spontaneous hydrolysis and promotes its binding to the 30S ribosomal subunits. Also involved in the hydrolysis of GTP during the formation of the 70S ribosomal complex.</text>
</comment>
<comment type="subcellular location">
    <subcellularLocation>
        <location evidence="2">Cytoplasm</location>
    </subcellularLocation>
</comment>
<comment type="similarity">
    <text evidence="2">Belongs to the TRAFAC class translation factor GTPase superfamily. Classic translation factor GTPase family. IF-2 subfamily.</text>
</comment>
<dbReference type="EMBL" id="CP000413">
    <property type="protein sequence ID" value="ABJ60205.1"/>
    <property type="molecule type" value="Genomic_DNA"/>
</dbReference>
<dbReference type="SMR" id="Q044B7"/>
<dbReference type="KEGG" id="lga:LGAS_0814"/>
<dbReference type="HOGENOM" id="CLU_006301_5_0_9"/>
<dbReference type="Proteomes" id="UP000000664">
    <property type="component" value="Chromosome"/>
</dbReference>
<dbReference type="GO" id="GO:0005829">
    <property type="term" value="C:cytosol"/>
    <property type="evidence" value="ECO:0007669"/>
    <property type="project" value="TreeGrafter"/>
</dbReference>
<dbReference type="GO" id="GO:0005525">
    <property type="term" value="F:GTP binding"/>
    <property type="evidence" value="ECO:0007669"/>
    <property type="project" value="UniProtKB-KW"/>
</dbReference>
<dbReference type="GO" id="GO:0003924">
    <property type="term" value="F:GTPase activity"/>
    <property type="evidence" value="ECO:0007669"/>
    <property type="project" value="UniProtKB-UniRule"/>
</dbReference>
<dbReference type="GO" id="GO:0003743">
    <property type="term" value="F:translation initiation factor activity"/>
    <property type="evidence" value="ECO:0007669"/>
    <property type="project" value="UniProtKB-UniRule"/>
</dbReference>
<dbReference type="CDD" id="cd01887">
    <property type="entry name" value="IF2_eIF5B"/>
    <property type="match status" value="1"/>
</dbReference>
<dbReference type="CDD" id="cd03702">
    <property type="entry name" value="IF2_mtIF2_II"/>
    <property type="match status" value="1"/>
</dbReference>
<dbReference type="CDD" id="cd03692">
    <property type="entry name" value="mtIF2_IVc"/>
    <property type="match status" value="1"/>
</dbReference>
<dbReference type="FunFam" id="2.40.30.10:FF:000007">
    <property type="entry name" value="Translation initiation factor IF-2"/>
    <property type="match status" value="1"/>
</dbReference>
<dbReference type="FunFam" id="2.40.30.10:FF:000008">
    <property type="entry name" value="Translation initiation factor IF-2"/>
    <property type="match status" value="1"/>
</dbReference>
<dbReference type="FunFam" id="3.40.50.10050:FF:000001">
    <property type="entry name" value="Translation initiation factor IF-2"/>
    <property type="match status" value="1"/>
</dbReference>
<dbReference type="FunFam" id="3.40.50.300:FF:000019">
    <property type="entry name" value="Translation initiation factor IF-2"/>
    <property type="match status" value="1"/>
</dbReference>
<dbReference type="Gene3D" id="1.10.10.2480">
    <property type="match status" value="1"/>
</dbReference>
<dbReference type="Gene3D" id="3.40.50.300">
    <property type="entry name" value="P-loop containing nucleotide triphosphate hydrolases"/>
    <property type="match status" value="1"/>
</dbReference>
<dbReference type="Gene3D" id="2.40.30.10">
    <property type="entry name" value="Translation factors"/>
    <property type="match status" value="2"/>
</dbReference>
<dbReference type="Gene3D" id="3.40.50.10050">
    <property type="entry name" value="Translation initiation factor IF- 2, domain 3"/>
    <property type="match status" value="1"/>
</dbReference>
<dbReference type="HAMAP" id="MF_00100_B">
    <property type="entry name" value="IF_2_B"/>
    <property type="match status" value="1"/>
</dbReference>
<dbReference type="InterPro" id="IPR053905">
    <property type="entry name" value="EF-G-like_DII"/>
</dbReference>
<dbReference type="InterPro" id="IPR044145">
    <property type="entry name" value="IF2_II"/>
</dbReference>
<dbReference type="InterPro" id="IPR006847">
    <property type="entry name" value="IF2_N"/>
</dbReference>
<dbReference type="InterPro" id="IPR027417">
    <property type="entry name" value="P-loop_NTPase"/>
</dbReference>
<dbReference type="InterPro" id="IPR005225">
    <property type="entry name" value="Small_GTP-bd"/>
</dbReference>
<dbReference type="InterPro" id="IPR000795">
    <property type="entry name" value="T_Tr_GTP-bd_dom"/>
</dbReference>
<dbReference type="InterPro" id="IPR000178">
    <property type="entry name" value="TF_IF2_bacterial-like"/>
</dbReference>
<dbReference type="InterPro" id="IPR015760">
    <property type="entry name" value="TIF_IF2"/>
</dbReference>
<dbReference type="InterPro" id="IPR023115">
    <property type="entry name" value="TIF_IF2_dom3"/>
</dbReference>
<dbReference type="InterPro" id="IPR036925">
    <property type="entry name" value="TIF_IF2_dom3_sf"/>
</dbReference>
<dbReference type="InterPro" id="IPR009000">
    <property type="entry name" value="Transl_B-barrel_sf"/>
</dbReference>
<dbReference type="NCBIfam" id="TIGR00487">
    <property type="entry name" value="IF-2"/>
    <property type="match status" value="1"/>
</dbReference>
<dbReference type="NCBIfam" id="TIGR00231">
    <property type="entry name" value="small_GTP"/>
    <property type="match status" value="1"/>
</dbReference>
<dbReference type="PANTHER" id="PTHR43381:SF5">
    <property type="entry name" value="TR-TYPE G DOMAIN-CONTAINING PROTEIN"/>
    <property type="match status" value="1"/>
</dbReference>
<dbReference type="PANTHER" id="PTHR43381">
    <property type="entry name" value="TRANSLATION INITIATION FACTOR IF-2-RELATED"/>
    <property type="match status" value="1"/>
</dbReference>
<dbReference type="Pfam" id="PF22042">
    <property type="entry name" value="EF-G_D2"/>
    <property type="match status" value="1"/>
</dbReference>
<dbReference type="Pfam" id="PF00009">
    <property type="entry name" value="GTP_EFTU"/>
    <property type="match status" value="1"/>
</dbReference>
<dbReference type="Pfam" id="PF11987">
    <property type="entry name" value="IF-2"/>
    <property type="match status" value="1"/>
</dbReference>
<dbReference type="Pfam" id="PF04760">
    <property type="entry name" value="IF2_N"/>
    <property type="match status" value="2"/>
</dbReference>
<dbReference type="SUPFAM" id="SSF52156">
    <property type="entry name" value="Initiation factor IF2/eIF5b, domain 3"/>
    <property type="match status" value="1"/>
</dbReference>
<dbReference type="SUPFAM" id="SSF52540">
    <property type="entry name" value="P-loop containing nucleoside triphosphate hydrolases"/>
    <property type="match status" value="1"/>
</dbReference>
<dbReference type="SUPFAM" id="SSF50447">
    <property type="entry name" value="Translation proteins"/>
    <property type="match status" value="2"/>
</dbReference>
<dbReference type="PROSITE" id="PS51722">
    <property type="entry name" value="G_TR_2"/>
    <property type="match status" value="1"/>
</dbReference>
<dbReference type="PROSITE" id="PS01176">
    <property type="entry name" value="IF2"/>
    <property type="match status" value="1"/>
</dbReference>
<accession>Q044B7</accession>
<gene>
    <name evidence="2" type="primary">infB</name>
    <name type="ordered locus">LGAS_0814</name>
</gene>